<protein>
    <recommendedName>
        <fullName>DNA-directed RNA polymerase 19 kDa subunit</fullName>
        <ecNumber>2.7.7.6</ecNumber>
    </recommendedName>
</protein>
<reference key="1">
    <citation type="journal article" date="2013" name="Am. J. Trop. Med. Hyg.">
        <title>Detection of human monkeypox in the republic of the congo following intensive community education.</title>
        <authorList>
            <person name="Reynolds M.G."/>
            <person name="Emerson G.L."/>
            <person name="Pukuta E."/>
            <person name="Karhemere S."/>
            <person name="Muyembe J.J."/>
            <person name="Bikindou A."/>
            <person name="McCollum A.M."/>
            <person name="Moses C."/>
            <person name="Wilkins K."/>
            <person name="Zhao H."/>
            <person name="Damon I.K."/>
            <person name="Karem K.L."/>
            <person name="Li Y."/>
            <person name="Carroll D.S."/>
            <person name="Mombouli J.V."/>
        </authorList>
    </citation>
    <scope>NUCLEOTIDE SEQUENCE [GENOMIC DNA]</scope>
    <source>
        <strain>ROC2010</strain>
    </source>
</reference>
<reference key="2">
    <citation type="journal article" date="2022" name="J. Infect. Dis.">
        <title>Exportation of Monkeypox virus from the African continent.</title>
        <authorList>
            <person name="Mauldin M.R."/>
            <person name="McCollum A.M."/>
            <person name="Nakazawa Y.J."/>
            <person name="Mandra A."/>
            <person name="Whitehouse E.R."/>
            <person name="Davidson W."/>
            <person name="Zhao H."/>
            <person name="Gao J."/>
            <person name="Li Y."/>
            <person name="Doty J."/>
            <person name="Yinka-Ogunleye A."/>
            <person name="Akinpelu A."/>
            <person name="Aruna O."/>
            <person name="Naidoo D."/>
            <person name="Lewandowski K."/>
            <person name="Afrough B."/>
            <person name="Graham V."/>
            <person name="Aarons E."/>
            <person name="Hewson R."/>
            <person name="Vipond R."/>
            <person name="Dunning J."/>
            <person name="Chand M."/>
            <person name="Brown C."/>
            <person name="Cohen-Gihon I."/>
            <person name="Erez N."/>
            <person name="Shifman O."/>
            <person name="Israeli O."/>
            <person name="Sharon M."/>
            <person name="Schwartz E."/>
            <person name="Beth-Din A."/>
            <person name="Zvi A."/>
            <person name="Mak T.M."/>
            <person name="Ng Y.K."/>
            <person name="Cui L."/>
            <person name="Lin R.T.P."/>
            <person name="Olson V.A."/>
            <person name="Brooks T."/>
            <person name="Paran N."/>
            <person name="Ihekweazu C."/>
            <person name="Reynolds M.G."/>
        </authorList>
    </citation>
    <scope>NUCLEOTIDE SEQUENCE [LARGE SCALE GENOMIC DNA]</scope>
    <source>
        <strain>MPXV-M5312_HM12_Rivers</strain>
    </source>
</reference>
<sequence length="161" mass="18639">MADTDDIIDYESDDLTEYEDDEEDGESLETSDIDPKSSYKIVESTSTHIEDAHSNLKHIGNHISALKRRYTRRISLFEIAGIIAESYNLLQRGRLPLVSEFSDETMKQNMLHVIIQEIEEGSCPIVIEKNGELLSVNDFDKDGLKFHLDYIIKIWKLQKRY</sequence>
<proteinExistence type="evidence at transcript level"/>
<comment type="function">
    <text evidence="1">Part of the DNA-dependent RNA polymerase which catalyzes the transcription of viral DNA into RNA using the four ribonucleoside triphosphates as substrates. Responsible for the transcription of early, intermediate and late genes. DNA-dependent RNA polymerase associates with the early transcription factor (ETF), itself composed of OPG118 and OPG133, thereby allowing the early genes transcription. Late transcription, and probably also intermediate transcription, require newly synthesized RNA polymerase.</text>
</comment>
<comment type="catalytic activity">
    <reaction evidence="1">
        <text>RNA(n) + a ribonucleoside 5'-triphosphate = RNA(n+1) + diphosphate</text>
        <dbReference type="Rhea" id="RHEA:21248"/>
        <dbReference type="Rhea" id="RHEA-COMP:14527"/>
        <dbReference type="Rhea" id="RHEA-COMP:17342"/>
        <dbReference type="ChEBI" id="CHEBI:33019"/>
        <dbReference type="ChEBI" id="CHEBI:61557"/>
        <dbReference type="ChEBI" id="CHEBI:140395"/>
        <dbReference type="EC" id="2.7.7.6"/>
    </reaction>
</comment>
<comment type="subunit">
    <text evidence="1">The DNA-dependent RNA polymerase used for intermediate and late genes expression consists of eight subunits Rpo30/OPG66, Rpo7/OPG90, Rpo22/OPG103, Rpo147/OPG105, Rpo18/OPG119, Rpo19/OPG131, Rpo132/OPG151 and Rpo35/OPG156. The same holoenzyme, with the addition of the transcription-specificity factor OPG109, is used for early gene expression.</text>
</comment>
<comment type="subcellular location">
    <subcellularLocation>
        <location evidence="1">Virion</location>
    </subcellularLocation>
    <text evidence="1">All the enzymes and other proteins required to synthesize early mRNAs are packaged within the virion core along with the DNA genome. This is necessary because viral early mRNAs are synthesized within minutes after virus entry into the cell and are extruded through pores in the core particle.</text>
</comment>
<comment type="induction">
    <text>Expressed in the early phase of the viral replicative cycle. Expression seems to continue throughout virus infection.</text>
</comment>
<comment type="similarity">
    <text evidence="3">Belongs to the poxviridae DNA-directed RNA polymerase 19 kDa subunit family.</text>
</comment>
<evidence type="ECO:0000250" key="1">
    <source>
        <dbReference type="UniProtKB" id="Q76ZQ8"/>
    </source>
</evidence>
<evidence type="ECO:0000256" key="2">
    <source>
        <dbReference type="SAM" id="MobiDB-lite"/>
    </source>
</evidence>
<evidence type="ECO:0000305" key="3"/>
<keyword id="KW-0240">DNA-directed RNA polymerase</keyword>
<keyword id="KW-0244">Early protein</keyword>
<keyword id="KW-0548">Nucleotidyltransferase</keyword>
<keyword id="KW-1185">Reference proteome</keyword>
<keyword id="KW-0804">Transcription</keyword>
<keyword id="KW-0808">Transferase</keyword>
<keyword id="KW-0946">Virion</keyword>
<gene>
    <name type="primary">OPG131</name>
    <name type="synonym">RPO19</name>
    <name type="ORF">MPXVgp116</name>
</gene>
<name>RP19_MONPV</name>
<organism>
    <name type="scientific">Monkeypox virus</name>
    <dbReference type="NCBI Taxonomy" id="10244"/>
    <lineage>
        <taxon>Viruses</taxon>
        <taxon>Varidnaviria</taxon>
        <taxon>Bamfordvirae</taxon>
        <taxon>Nucleocytoviricota</taxon>
        <taxon>Pokkesviricetes</taxon>
        <taxon>Chitovirales</taxon>
        <taxon>Poxviridae</taxon>
        <taxon>Chordopoxvirinae</taxon>
        <taxon>Orthopoxvirus</taxon>
    </lineage>
</organism>
<organismHost>
    <name type="scientific">Cynomys gunnisoni</name>
    <name type="common">Gunnison's prairie dog</name>
    <name type="synonym">Spermophilus gunnisoni</name>
    <dbReference type="NCBI Taxonomy" id="45479"/>
</organismHost>
<organismHost>
    <name type="scientific">Cynomys leucurus</name>
    <name type="common">White-tailed prairie dog</name>
    <dbReference type="NCBI Taxonomy" id="99825"/>
</organismHost>
<organismHost>
    <name type="scientific">Cynomys ludovicianus</name>
    <name type="common">Black-tailed prairie dog</name>
    <dbReference type="NCBI Taxonomy" id="45480"/>
</organismHost>
<organismHost>
    <name type="scientific">Cynomys mexicanus</name>
    <name type="common">Mexican prairie dog</name>
    <dbReference type="NCBI Taxonomy" id="99826"/>
</organismHost>
<organismHost>
    <name type="scientific">Cynomys parvidens</name>
    <name type="common">Utah prairie dog</name>
    <dbReference type="NCBI Taxonomy" id="99827"/>
</organismHost>
<organismHost>
    <name type="scientific">Gliridae</name>
    <name type="common">dormice</name>
    <dbReference type="NCBI Taxonomy" id="30650"/>
</organismHost>
<organismHost>
    <name type="scientific">Heliosciurus ruwenzorii</name>
    <name type="common">Ruwenzori sun squirrel</name>
    <dbReference type="NCBI Taxonomy" id="226685"/>
</organismHost>
<organismHost>
    <name type="scientific">Homo sapiens</name>
    <name type="common">Human</name>
    <dbReference type="NCBI Taxonomy" id="9606"/>
</organismHost>
<organismHost>
    <name type="scientific">Mus musculus</name>
    <name type="common">Mouse</name>
    <dbReference type="NCBI Taxonomy" id="10090"/>
</organismHost>
<accession>A0A7H0DNA3</accession>
<dbReference type="EC" id="2.7.7.6"/>
<dbReference type="EMBL" id="KC257461">
    <property type="protein sequence ID" value="AGF37020.1"/>
    <property type="molecule type" value="Genomic_DNA"/>
</dbReference>
<dbReference type="EMBL" id="MT903340">
    <property type="protein sequence ID" value="QNP12986.1"/>
    <property type="molecule type" value="Genomic_DNA"/>
</dbReference>
<dbReference type="RefSeq" id="NP_536543.1">
    <property type="nucleotide sequence ID" value="NC_003310.1"/>
</dbReference>
<dbReference type="RefSeq" id="YP_010377113.1">
    <property type="nucleotide sequence ID" value="NC_063383.1"/>
</dbReference>
<dbReference type="SMR" id="A0A7H0DNA3"/>
<dbReference type="GeneID" id="72551526"/>
<dbReference type="GeneID" id="929014"/>
<dbReference type="KEGG" id="vg:929014"/>
<dbReference type="Proteomes" id="UP000516359">
    <property type="component" value="Genome"/>
</dbReference>
<dbReference type="GO" id="GO:0000428">
    <property type="term" value="C:DNA-directed RNA polymerase complex"/>
    <property type="evidence" value="ECO:0007669"/>
    <property type="project" value="UniProtKB-KW"/>
</dbReference>
<dbReference type="GO" id="GO:0044423">
    <property type="term" value="C:virion component"/>
    <property type="evidence" value="ECO:0007669"/>
    <property type="project" value="UniProtKB-KW"/>
</dbReference>
<dbReference type="GO" id="GO:0003677">
    <property type="term" value="F:DNA binding"/>
    <property type="evidence" value="ECO:0007669"/>
    <property type="project" value="InterPro"/>
</dbReference>
<dbReference type="GO" id="GO:0003899">
    <property type="term" value="F:DNA-directed RNA polymerase activity"/>
    <property type="evidence" value="ECO:0007669"/>
    <property type="project" value="InterPro"/>
</dbReference>
<dbReference type="GO" id="GO:0006351">
    <property type="term" value="P:DNA-templated transcription"/>
    <property type="evidence" value="ECO:0007669"/>
    <property type="project" value="InterPro"/>
</dbReference>
<dbReference type="InterPro" id="IPR007984">
    <property type="entry name" value="DNA-dir_RNA_Pol_19kDa_poxvir"/>
</dbReference>
<dbReference type="Pfam" id="PF05320">
    <property type="entry name" value="Pox_RNA_Pol_19"/>
    <property type="match status" value="1"/>
</dbReference>
<dbReference type="PIRSF" id="PIRSF000743">
    <property type="entry name" value="RPO19"/>
    <property type="match status" value="1"/>
</dbReference>
<feature type="chain" id="PRO_0000457495" description="DNA-directed RNA polymerase 19 kDa subunit">
    <location>
        <begin position="1"/>
        <end position="161"/>
    </location>
</feature>
<feature type="region of interest" description="Disordered" evidence="2">
    <location>
        <begin position="1"/>
        <end position="35"/>
    </location>
</feature>
<feature type="compositionally biased region" description="Acidic residues" evidence="2">
    <location>
        <begin position="1"/>
        <end position="32"/>
    </location>
</feature>